<sequence length="374" mass="44000">MENFPTEYFLNTTVRLLEYIRYRDSNYTREERIENLHYAYNKAAHHFAQPRQQQLLKVDPKRLQASLQTIVGMVVYSWAKVSKECMADLSIHYTYTLVLDDSKDDPYPTMVNYFDDLQAGREQAHPWWALVNEHFPNVLRHFGPFCSLNLIRSTLDFFEGCWIEQYNFGGFPGSHDYPQFLRRMNGLGHCVGASLWPKEQFNERSLFLEITSAIAQMENWMVWVNDLMSFYKEFDDERDQISLVKNYVVSDEISLHEALEKLTQDTLHSSKQMVAVFSDKDPQVMDTIECFMHGYVTWHLCDRRYRLSEIYEKVKEEKTEDAQKFCKFYEQAANVGAVSPSEWAYPPVAQLANVRSKDVKEVQKPFLSSIELVE</sequence>
<reference key="1">
    <citation type="journal article" date="1989" name="Gene">
        <title>Isolation and nucleotide sequence of a sesquiterpene cyclase gene from the trichothecene-producing fungus Fusarium sporotrichioides.</title>
        <authorList>
            <person name="Hohn T.M."/>
            <person name="Beremand P.D."/>
        </authorList>
    </citation>
    <scope>NUCLEOTIDE SEQUENCE [GENOMIC DNA]</scope>
    <scope>PARTIAL PROTEIN SEQUENCE</scope>
    <source>
        <strain>ATCC 24631 / NRRL 3299</strain>
    </source>
</reference>
<reference key="2">
    <citation type="journal article" date="2001" name="Fungal Genet. Biol.">
        <title>A genetic and biochemical approach to study trichothecene diversity in Fusarium sporotrichioides and Fusarium graminearum.</title>
        <authorList>
            <person name="Brown D.W."/>
            <person name="McCormick S.P."/>
            <person name="Alexander N.J."/>
            <person name="Proctor R.H."/>
            <person name="Desjardins A.E."/>
        </authorList>
    </citation>
    <scope>NUCLEOTIDE SEQUENCE [GENOMIC DNA]</scope>
    <scope>FUNCTION</scope>
    <source>
        <strain>ATCC 24631 / NRRL 3299</strain>
    </source>
</reference>
<reference key="3">
    <citation type="submission" date="2001-04" db="EMBL/GenBank/DDBJ databases">
        <title>Fusarium sporotrichioides trichodiene synthase (TRI5) gene cDNA.</title>
        <authorList>
            <person name="Ren Q."/>
            <person name="Tag A."/>
            <person name="Peplow A."/>
            <person name="Lai H."/>
            <person name="Kupfer D."/>
            <person name="Peterson A."/>
            <person name="Beremand M."/>
            <person name="Roe B."/>
        </authorList>
    </citation>
    <scope>NUCLEOTIDE SEQUENCE [MRNA]</scope>
</reference>
<reference key="4">
    <citation type="journal article" date="1986" name="Arch. Biochem. Biophys.">
        <title>Purification and characterization of the sesquiterpene cyclase trichodiene synthetase from Fusarium sporotrichioides.</title>
        <authorList>
            <person name="Hohn T.M."/>
            <person name="Vanmiddlesworth F."/>
        </authorList>
    </citation>
    <scope>FUNCTION</scope>
    <scope>CATALYTIC ACTIVITY</scope>
    <scope>BIOPHYSICOCHEMICAL PROPERTIES</scope>
    <scope>COFACTOR</scope>
    <scope>PATHWAY</scope>
</reference>
<reference key="5">
    <citation type="journal article" date="1989" name="Arch. Biochem. Biophys.">
        <title>Expression of the trichodiene synthase gene of Fusarium sporotrichioides in Escherichia coli results in sesquiterpene production.</title>
        <authorList>
            <person name="Hohn T.M."/>
            <person name="Plattner R.D."/>
        </authorList>
    </citation>
    <scope>FUNCTION</scope>
</reference>
<reference key="6">
    <citation type="journal article" date="1989" name="Appl. Environ. Microbiol.">
        <title>Regulation of trichodiene synthase in Fusarium sporotrichioides and Gibberella pulicaris (Fusarium sambucinum).</title>
        <authorList>
            <person name="Hohn T.M."/>
            <person name="Beremand M.N."/>
        </authorList>
    </citation>
    <scope>INDUCTION</scope>
</reference>
<reference key="7">
    <citation type="journal article" date="1990" name="Appl. Environ. Microbiol.">
        <title>Bioconversion of possible T-2 toxin precursors by a mutant strain of Fusarium sporotrichioides NRRL 3299.</title>
        <authorList>
            <person name="McCormick S.P."/>
            <person name="Taylor S.L."/>
            <person name="Plattner R.D."/>
            <person name="Beremand M.N."/>
        </authorList>
    </citation>
    <scope>FUNCTION</scope>
</reference>
<reference key="8">
    <citation type="journal article" date="1995" name="Biochemistry">
        <title>Trichodiene synthase. Identification of active site residues by site-directed mutagenesis.</title>
        <authorList>
            <person name="Cane D.E."/>
            <person name="Shim J.H."/>
            <person name="Xue Q."/>
            <person name="Fitzsimons B.C."/>
            <person name="Hohn T.M."/>
        </authorList>
    </citation>
    <scope>FUNCTION</scope>
    <scope>CATALYTIC ACTIVITY</scope>
    <scope>MUTAGENESIS OF CYS-146; CYS-190; ARG-304 AND TYR-305</scope>
</reference>
<reference key="9">
    <citation type="journal article" date="1995" name="Mol. Gen. Genet.">
        <title>The Tri4 gene of Fusarium sporotrichioides encodes a cytochrome P450 monooxygenase involved in trichothecene biosynthesis.</title>
        <authorList>
            <person name="Hohn T.M."/>
            <person name="Desjardins A.E."/>
            <person name="McCormick S.P."/>
        </authorList>
    </citation>
    <scope>FUNCTION</scope>
</reference>
<reference key="10">
    <citation type="journal article" date="1996" name="Appl. Environ. Microbiol.">
        <title>Isolation and characterization of Tri3, a gene encoding 15-O-acetyltransferase from Fusarium sporotrichioides.</title>
        <authorList>
            <person name="McCormick S.P."/>
            <person name="Hohn T.M."/>
            <person name="Desjardins A.E."/>
        </authorList>
    </citation>
    <scope>FUNCTION</scope>
</reference>
<reference key="11">
    <citation type="journal article" date="1996" name="Biochemistry">
        <title>Trichodiene synthase. Probing the role of the highly conserved aspartate-rich region by site-directed mutagenesis.</title>
        <authorList>
            <person name="Cane D.E."/>
            <person name="Xue Q."/>
            <person name="Fitzsimons B.C."/>
        </authorList>
    </citation>
    <scope>FUNCTION</scope>
    <scope>DOMAIN</scope>
    <scope>COFACTOR</scope>
    <scope>BIOPHYSICOCHEMICAL PROPERTIES</scope>
    <scope>CATALYTIC ACTIVITY</scope>
    <scope>MUTAGENESIS OF ASP-100; ASP-101 AND ASP-104</scope>
</reference>
<reference key="12">
    <citation type="journal article" date="1998" name="Appl. Environ. Microbiol.">
        <title>The TRI11 gene of Fusarium sporotrichioides encodes a cytochrome P-450 monooxygenase required for C-15 hydroxylation in trichothecene biosynthesis.</title>
        <authorList>
            <person name="Alexander N.J."/>
            <person name="Hohn T.M."/>
            <person name="McCormick S.P."/>
        </authorList>
    </citation>
    <scope>FUNCTION</scope>
</reference>
<reference key="13">
    <citation type="journal article" date="1999" name="Appl. Environ. Microbiol.">
        <title>Disruption of TRI101, the gene encoding trichothecene 3-O-acetyltransferase, from Fusarium sporotrichioides.</title>
        <authorList>
            <person name="McCormick S.P."/>
            <person name="Alexander N.J."/>
            <person name="Trapp S.E."/>
            <person name="Hohn T.M."/>
        </authorList>
    </citation>
    <scope>FUNCTION</scope>
</reference>
<reference key="14">
    <citation type="journal article" date="2002" name="Appl. Environ. Microbiol.">
        <title>Fusarium Tri8 encodes a trichothecene C-3 esterase.</title>
        <authorList>
            <person name="McCormick S.P."/>
            <person name="Alexander N.J."/>
        </authorList>
    </citation>
    <scope>FUNCTION</scope>
</reference>
<reference key="15">
    <citation type="journal article" date="2002" name="Fungal Genet. Biol.">
        <title>Inactivation of a cytochrome P-450 is a determinant of trichothecene diversity in Fusarium species.</title>
        <authorList>
            <person name="Brown D.W."/>
            <person name="McCormick S.P."/>
            <person name="Alexander N.J."/>
            <person name="Proctor R.H."/>
            <person name="Desjardins A.E."/>
        </authorList>
    </citation>
    <scope>FUNCTION</scope>
</reference>
<reference key="16">
    <citation type="journal article" date="2003" name="Appl. Environ. Microbiol.">
        <title>Tri1 encodes the cytochrome P450 monooxygenase for C-8 hydroxylation during trichothecene biosynthesis in Fusarium sporotrichioides and resides upstream of another new Tri gene.</title>
        <authorList>
            <person name="Meek I.B."/>
            <person name="Peplow A.W."/>
            <person name="Ake C. Jr."/>
            <person name="Phillips T.D."/>
            <person name="Beremand M.N."/>
        </authorList>
    </citation>
    <scope>FUNCTION</scope>
</reference>
<reference key="17">
    <citation type="journal article" date="2003" name="Appl. Environ. Microbiol.">
        <title>Identification of new genes positively regulated by Tri10 and a regulatory network for trichothecene mycotoxin production.</title>
        <authorList>
            <person name="Peplow A.W."/>
            <person name="Tag A.G."/>
            <person name="Garifullina G.F."/>
            <person name="Beremand M.N."/>
        </authorList>
    </citation>
    <scope>INDUCTION</scope>
</reference>
<reference key="18">
    <citation type="journal article" date="2003" name="Appl. Environ. Microbiol.">
        <title>Tri16 is required for esterification of position C-8 during trichothecene mycotoxin production by Fusarium sporotrichioides.</title>
        <authorList>
            <person name="Peplow A.W."/>
            <person name="Meek I.B."/>
            <person name="Wiles M.C."/>
            <person name="Phillips T.D."/>
            <person name="Beremand M.N."/>
        </authorList>
    </citation>
    <scope>FUNCTION</scope>
</reference>
<reference key="19">
    <citation type="journal article" date="2006" name="Can. J. Microbiol.">
        <title>Fusarium Tri4 encodes a multifunctional oxygenase required for trichothecene biosynthesis.</title>
        <authorList>
            <person name="McCormick S.P."/>
            <person name="Alexander N.J."/>
            <person name="Proctor R.H."/>
        </authorList>
    </citation>
    <scope>FUNCTION</scope>
</reference>
<reference evidence="26 27" key="20">
    <citation type="journal article" date="2001" name="Proc. Natl. Acad. Sci. U.S.A.">
        <title>Structure of trichodiene synthase from Fusarium sporotrichioides provides mechanistic inferences on the terpene cyclization cascade.</title>
        <authorList>
            <person name="Rynkiewicz M.J."/>
            <person name="Cane D.E."/>
            <person name="Christianson D.W."/>
        </authorList>
    </citation>
    <scope>X-RAY CRYSTALLOGRAPHY (2.5 ANGSTROMS)</scope>
</reference>
<reference key="21">
    <citation type="journal article" date="2002" name="Biochemistry">
        <title>X-ray crystal structures of D100E trichodiene synthase and its pyrophosphate complex reveal the basis for terpene product diversity.</title>
        <authorList>
            <person name="Rynkiewicz M.J."/>
            <person name="Cane D.E."/>
            <person name="Christianson D.W."/>
        </authorList>
    </citation>
    <scope>X-RAY CRYSTALLOGRAPHY (2.40 ANGSTROMS)</scope>
    <scope>MUTAGENESIS OF ASP-100</scope>
</reference>
<reference evidence="28 29" key="22">
    <citation type="journal article" date="2005" name="Biochemistry">
        <title>Role of arginine-304 in the diphosphate-triggered active site closure mechanism of trichodiene synthase.</title>
        <authorList>
            <person name="Vedula L.S."/>
            <person name="Cane D.E."/>
            <person name="Christianson D.W."/>
        </authorList>
    </citation>
    <scope>X-RAY CRYSTALLOGRAPHY (2.50 ANGSTROMS) IN COMPLEX WITH MAGNESIUM</scope>
    <scope>COFACTOR</scope>
    <scope>MUTAGENESIS OF ARG-304</scope>
    <scope>CATALYTIC ACTIVITY</scope>
</reference>
<reference evidence="30 31 32 33 34 35" key="23">
    <citation type="journal article" date="2005" name="Biochemistry">
        <title>Molecular recognition of the substrate diphosphate group governs product diversity in trichodiene synthase mutants.</title>
        <authorList>
            <person name="Vedula L.S."/>
            <person name="Rynkiewicz M.J."/>
            <person name="Pyun H.J."/>
            <person name="Coates R.M."/>
            <person name="Cane D.E."/>
            <person name="Christianson D.W."/>
        </authorList>
    </citation>
    <scope>X-RAY CRYSTALLOGRAPHY (2.10 ANGSTROMS) IN COMPLEX WITH MAGNESIUM AND INHIBITOR</scope>
    <scope>COFACTOR</scope>
    <scope>MUTAGENESIS OF TYR-305</scope>
</reference>
<reference evidence="43 44" key="24">
    <citation type="journal article" date="2007" name="Arch. Biochem. Biophys.">
        <title>Exploring biosynthetic diversity with trichodiene synthase.</title>
        <authorList>
            <person name="Vedula L.S."/>
            <person name="Zhao Y."/>
            <person name="Coates R.M."/>
            <person name="Koyama T."/>
            <person name="Cane D.E."/>
            <person name="Christianson D.W."/>
        </authorList>
    </citation>
    <scope>X-RAY CRYSTALLOGRAPHY (2.85 ANGSTROMS) IN COMPLEX WITH MAGNESIUM AND INHIBITOR</scope>
    <scope>CATALYTIC ACTIVITY</scope>
    <scope>ACTIVITY REGULATION</scope>
</reference>
<reference evidence="38 39 40 41 42" key="25">
    <citation type="journal article" date="2008" name="Arch. Biochem. Biophys.">
        <title>Structural and mechanistic analysis of trichodiene synthase using site-directed mutagenesis: probing the catalytic function of tyrosine-295 and the asparagine-225/serine-229/glutamate-233-Mg2+B motif.</title>
        <authorList>
            <person name="Vedula L.S."/>
            <person name="Jiang J."/>
            <person name="Zakharian T."/>
            <person name="Cane D.E."/>
            <person name="Christianson D.W."/>
        </authorList>
    </citation>
    <scope>X-RAY CRYSTALLOGRAPHY (2.10 ANGSTROMS) IN COMPLEX WITH MAGNESIUM</scope>
    <scope>MUTAGENESIS OF ASN-225; SER-229 AND TYR-295</scope>
</reference>
<accession>P13513</accession>
<accession>Q7LP67</accession>
<dbReference type="EC" id="4.2.3.6" evidence="10 13 16 18 20"/>
<dbReference type="EMBL" id="AF364179">
    <property type="protein sequence ID" value="AAD13657.1"/>
    <property type="molecule type" value="Genomic_DNA"/>
</dbReference>
<dbReference type="EMBL" id="AF359360">
    <property type="protein sequence ID" value="AAK33074.1"/>
    <property type="molecule type" value="Genomic_DNA"/>
</dbReference>
<dbReference type="EMBL" id="AY032745">
    <property type="protein sequence ID" value="AAK77935.1"/>
    <property type="molecule type" value="mRNA"/>
</dbReference>
<dbReference type="PIR" id="JU0064">
    <property type="entry name" value="SYFUTP"/>
</dbReference>
<dbReference type="PDB" id="1JFA">
    <property type="method" value="X-ray"/>
    <property type="resolution" value="2.50 A"/>
    <property type="chains" value="A/B=1-374"/>
</dbReference>
<dbReference type="PDB" id="1JFG">
    <property type="method" value="X-ray"/>
    <property type="resolution" value="2.50 A"/>
    <property type="chains" value="A/B=1-374"/>
</dbReference>
<dbReference type="PDB" id="1KIY">
    <property type="method" value="X-ray"/>
    <property type="resolution" value="2.40 A"/>
    <property type="chains" value="A/B=1-374"/>
</dbReference>
<dbReference type="PDB" id="1KIZ">
    <property type="method" value="X-ray"/>
    <property type="resolution" value="2.60 A"/>
    <property type="chains" value="A/B=1-374"/>
</dbReference>
<dbReference type="PDB" id="1YJ4">
    <property type="method" value="X-ray"/>
    <property type="resolution" value="2.30 A"/>
    <property type="chains" value="A/B=1-374"/>
</dbReference>
<dbReference type="PDB" id="1YYQ">
    <property type="method" value="X-ray"/>
    <property type="resolution" value="2.10 A"/>
    <property type="chains" value="A/B=1-374"/>
</dbReference>
<dbReference type="PDB" id="1YYR">
    <property type="method" value="X-ray"/>
    <property type="resolution" value="2.50 A"/>
    <property type="chains" value="A/B=1-374"/>
</dbReference>
<dbReference type="PDB" id="1YYS">
    <property type="method" value="X-ray"/>
    <property type="resolution" value="2.75 A"/>
    <property type="chains" value="A/B=1-374"/>
</dbReference>
<dbReference type="PDB" id="1YYT">
    <property type="method" value="X-ray"/>
    <property type="resolution" value="2.90 A"/>
    <property type="chains" value="A/B=1-374"/>
</dbReference>
<dbReference type="PDB" id="1YYU">
    <property type="method" value="X-ray"/>
    <property type="resolution" value="2.95 A"/>
    <property type="chains" value="A/B=1-374"/>
</dbReference>
<dbReference type="PDB" id="2AEK">
    <property type="method" value="X-ray"/>
    <property type="resolution" value="2.90 A"/>
    <property type="chains" value="A/B=1-374"/>
</dbReference>
<dbReference type="PDB" id="2AEL">
    <property type="method" value="X-ray"/>
    <property type="resolution" value="2.50 A"/>
    <property type="chains" value="A/B=1-374"/>
</dbReference>
<dbReference type="PDB" id="2AET">
    <property type="method" value="X-ray"/>
    <property type="resolution" value="2.75 A"/>
    <property type="chains" value="A/B=1-374"/>
</dbReference>
<dbReference type="PDB" id="2PS4">
    <property type="method" value="X-ray"/>
    <property type="resolution" value="2.46 A"/>
    <property type="chains" value="A/B=1-374"/>
</dbReference>
<dbReference type="PDB" id="2PS5">
    <property type="method" value="X-ray"/>
    <property type="resolution" value="2.10 A"/>
    <property type="chains" value="A/B=1-374"/>
</dbReference>
<dbReference type="PDB" id="2PS6">
    <property type="method" value="X-ray"/>
    <property type="resolution" value="2.60 A"/>
    <property type="chains" value="A/B=1-374"/>
</dbReference>
<dbReference type="PDB" id="2PS7">
    <property type="method" value="X-ray"/>
    <property type="resolution" value="2.35 A"/>
    <property type="chains" value="A/B=1-374"/>
</dbReference>
<dbReference type="PDB" id="2PS8">
    <property type="method" value="X-ray"/>
    <property type="resolution" value="2.67 A"/>
    <property type="chains" value="A/B=1-374"/>
</dbReference>
<dbReference type="PDB" id="2Q9Y">
    <property type="method" value="X-ray"/>
    <property type="resolution" value="2.85 A"/>
    <property type="chains" value="A/B=1-374"/>
</dbReference>
<dbReference type="PDB" id="2Q9Z">
    <property type="method" value="X-ray"/>
    <property type="resolution" value="2.95 A"/>
    <property type="chains" value="A/B=1-374"/>
</dbReference>
<dbReference type="PDBsum" id="1JFA"/>
<dbReference type="PDBsum" id="1JFG"/>
<dbReference type="PDBsum" id="1KIY"/>
<dbReference type="PDBsum" id="1KIZ"/>
<dbReference type="PDBsum" id="1YJ4"/>
<dbReference type="PDBsum" id="1YYQ"/>
<dbReference type="PDBsum" id="1YYR"/>
<dbReference type="PDBsum" id="1YYS"/>
<dbReference type="PDBsum" id="1YYT"/>
<dbReference type="PDBsum" id="1YYU"/>
<dbReference type="PDBsum" id="2AEK"/>
<dbReference type="PDBsum" id="2AEL"/>
<dbReference type="PDBsum" id="2AET"/>
<dbReference type="PDBsum" id="2PS4"/>
<dbReference type="PDBsum" id="2PS5"/>
<dbReference type="PDBsum" id="2PS6"/>
<dbReference type="PDBsum" id="2PS7"/>
<dbReference type="PDBsum" id="2PS8"/>
<dbReference type="PDBsum" id="2Q9Y"/>
<dbReference type="PDBsum" id="2Q9Z"/>
<dbReference type="SMR" id="P13513"/>
<dbReference type="KEGG" id="ag:AAD13657"/>
<dbReference type="BRENDA" id="4.2.3.6">
    <property type="organism ID" value="2364"/>
</dbReference>
<dbReference type="UniPathway" id="UPA00267"/>
<dbReference type="EvolutionaryTrace" id="P13513"/>
<dbReference type="GO" id="GO:0046872">
    <property type="term" value="F:metal ion binding"/>
    <property type="evidence" value="ECO:0007669"/>
    <property type="project" value="UniProtKB-KW"/>
</dbReference>
<dbReference type="GO" id="GO:0045482">
    <property type="term" value="F:trichodiene synthase activity"/>
    <property type="evidence" value="ECO:0007669"/>
    <property type="project" value="UniProtKB-EC"/>
</dbReference>
<dbReference type="GO" id="GO:0016106">
    <property type="term" value="P:sesquiterpenoid biosynthetic process"/>
    <property type="evidence" value="ECO:0007669"/>
    <property type="project" value="InterPro"/>
</dbReference>
<dbReference type="CDD" id="cd00686">
    <property type="entry name" value="Terpene_cyclase_cis_trans_C1"/>
    <property type="match status" value="1"/>
</dbReference>
<dbReference type="Gene3D" id="1.10.600.10">
    <property type="entry name" value="Farnesyl Diphosphate Synthase"/>
    <property type="match status" value="1"/>
</dbReference>
<dbReference type="InterPro" id="IPR008949">
    <property type="entry name" value="Isoprenoid_synthase_dom_sf"/>
</dbReference>
<dbReference type="InterPro" id="IPR010458">
    <property type="entry name" value="TRI5_ascomyc"/>
</dbReference>
<dbReference type="InterPro" id="IPR024652">
    <property type="entry name" value="Trichodiene_synth"/>
</dbReference>
<dbReference type="Pfam" id="PF06330">
    <property type="entry name" value="TRI5"/>
    <property type="match status" value="1"/>
</dbReference>
<dbReference type="PIRSF" id="PIRSF001388">
    <property type="entry name" value="TRI5"/>
    <property type="match status" value="1"/>
</dbReference>
<dbReference type="SFLD" id="SFLDS00005">
    <property type="entry name" value="Isoprenoid_Synthase_Type_I"/>
    <property type="match status" value="1"/>
</dbReference>
<dbReference type="SFLD" id="SFLDG01021">
    <property type="entry name" value="Trichodiene_Synthase_Like"/>
    <property type="match status" value="1"/>
</dbReference>
<dbReference type="SUPFAM" id="SSF48576">
    <property type="entry name" value="Terpenoid synthases"/>
    <property type="match status" value="1"/>
</dbReference>
<proteinExistence type="evidence at protein level"/>
<name>TRI5_FUSSP</name>
<organism>
    <name type="scientific">Fusarium sporotrichioides</name>
    <dbReference type="NCBI Taxonomy" id="5514"/>
    <lineage>
        <taxon>Eukaryota</taxon>
        <taxon>Fungi</taxon>
        <taxon>Dikarya</taxon>
        <taxon>Ascomycota</taxon>
        <taxon>Pezizomycotina</taxon>
        <taxon>Sordariomycetes</taxon>
        <taxon>Hypocreomycetidae</taxon>
        <taxon>Hypocreales</taxon>
        <taxon>Nectriaceae</taxon>
        <taxon>Fusarium</taxon>
    </lineage>
</organism>
<protein>
    <recommendedName>
        <fullName evidence="22">Trichodiene synthase</fullName>
        <ecNumber evidence="10 13 16 18 20">4.2.3.6</ecNumber>
    </recommendedName>
    <alternativeName>
        <fullName evidence="23">Core trichothecene cluster (CTC) protein 5</fullName>
    </alternativeName>
    <alternativeName>
        <fullName evidence="22">Sesquiterpene cyclase TRI5</fullName>
        <shortName evidence="22">TS</shortName>
    </alternativeName>
</protein>
<keyword id="KW-0002">3D-structure</keyword>
<keyword id="KW-0903">Direct protein sequencing</keyword>
<keyword id="KW-0456">Lyase</keyword>
<keyword id="KW-0460">Magnesium</keyword>
<keyword id="KW-0479">Metal-binding</keyword>
<comment type="function">
    <text evidence="1 2 4 5 6 8 12 15 16 17 19 21">Trichodiene synthase; part of the core gene cluster that mediates the biosynthesis of trichothecenes, a very large family of chemically related bicyclic sesquiterpene compounds acting as mycotoxins, including T2-toxin (PubMed:11352533, PubMed:2817906). The biosynthesis of trichothecenes begins with the cyclization of farnesyl diphosphate to trichodiene and is catalyzed by the trichodiene synthase TRI5 (PubMed:3800398, PubMed:7873527, PubMed:8823172). Trichodiene undergoes a series of oxygenations catalyzed by the cytochrome P450 monooxygenase TRI4 (PubMed:7651333). TRI4 controls the addition of four oxygens at C-2, C-3, C-11, and the C-12, C-13-epoxide to form the intermediate isotrichotriol (PubMed:16917519). Isotrichotriol then undergoes a non-enzymatic isomerization and cyclization to form isotrichodermol (PubMed:2317042). During this process, the oxygen at the C-2 position becomes the pyran ring oxygen and the hydroxyl group at C-11 is lost (PubMed:2317042). More complex type A trichothecenes are built by modifying isotrichodermol through a series of paired hydroxylation and acetylation or acylation steps (PubMed:11352533). Isotrichodermol is converted to isotrichodermin by the acetyltransferase TRI101 (PubMed:10583973). TRI101 encodes a C-3 transacetylase that acts as a self-protection or resistance factor during biosynthesis and that the presence of a free C-3 hydroxyl group is a key component of Fusarium trichothecene phytotoxicity (PubMed:10583973). A second hydroxyl group is added to C-15 by the trichothecene C-15 hydroxylase TRI11, producing 15-decalonectrin, which is then acetylated by TRI3, producing calonectrin (PubMed:8593041, PubMed:9435078). A third hydroxyl group is added at C-4 by the cytochrome P450 monooxygenase TRI13, converting calonectrin to 3,15-diacetoxyspirpenol, which is subsequently acetylated by the acetyltransferase TRI7 (PubMed:11352533, PubMed:12135578). A fourth hydroxyl group is added to C-8 by the cytochrome P450 monooxygenase TRI1, followed by the addition of an isovaleryl moiety by TRI16 (PubMed:12620849, PubMed:14532047). Finally, the acetyl group is removed from the C-3 position by the trichothecene C-3 esterase TRI8 to produce T-2 toxin (PubMed:12039755).</text>
</comment>
<comment type="catalytic activity">
    <reaction evidence="10 13 16 18 20">
        <text>(2E,6E)-farnesyl diphosphate = trichodiene + diphosphate</text>
        <dbReference type="Rhea" id="RHEA:12052"/>
        <dbReference type="ChEBI" id="CHEBI:15861"/>
        <dbReference type="ChEBI" id="CHEBI:33019"/>
        <dbReference type="ChEBI" id="CHEBI:175763"/>
        <dbReference type="EC" id="4.2.3.6"/>
    </reaction>
</comment>
<comment type="cofactor">
    <cofactor evidence="9 10 13 14 16 20">
        <name>Mg(2+)</name>
        <dbReference type="ChEBI" id="CHEBI:18420"/>
    </cofactor>
    <cofactor evidence="20">
        <name>Mn(2+)</name>
        <dbReference type="ChEBI" id="CHEBI:29035"/>
    </cofactor>
    <text evidence="25">Some of the cofactor binding sites show unusual localization within the protein.</text>
</comment>
<comment type="activity regulation">
    <text evidence="13">Benzyl triethylammonium cation (BTAC) acts as a competitive inhibitor of trichodiene synthase reaction in the presence of pyrophosphate (PPi) (PubMed:17678871).</text>
</comment>
<comment type="biophysicochemical properties">
    <kinetics>
        <KM evidence="16 18">62 nM for farnesyl pyrophosphate</KM>
        <KM evidence="20">78 nM for Mg(2+)</KM>
        <KM evidence="20">84.8 nM for Mn(2+)</KM>
    </kinetics>
    <phDependence>
        <text evidence="16">Optimum pH is 6.75-7.75.</text>
    </phDependence>
</comment>
<comment type="pathway">
    <text evidence="16">Sesquiterpene biosynthesis; trichothecene biosynthesis.</text>
</comment>
<comment type="induction">
    <text evidence="7 11">Expression is positively regulated by the trichothecene cluster-specific transcription activator TRI10 (PubMed:12732543). Expression is induced between 18h and 21h growth on GYEP medium (PubMed:16347944). The initial detection of trichothecenes occurs several hours after the initial detection of TRI5 (PubMed:16347944). The initiation of trichothecene biosynthesis occurs with a high concentration of glucose remaining in the culture medium (PubMed:16347944).</text>
</comment>
<comment type="miscellaneous">
    <text evidence="25">Trichothecenes are sesquiterpenoid toxins that act by inhibiting protein biosynthesis.</text>
</comment>
<comment type="similarity">
    <text evidence="25">Belongs to the trichodiene synthase family.</text>
</comment>
<feature type="chain" id="PRO_0000221584" description="Trichodiene synthase">
    <location>
        <begin position="1"/>
        <end position="374"/>
    </location>
</feature>
<feature type="region of interest" description="Aspartate-rich domain" evidence="24">
    <location>
        <begin position="100"/>
        <end position="104"/>
    </location>
</feature>
<feature type="binding site" evidence="14 41">
    <location>
        <position position="100"/>
    </location>
    <ligand>
        <name>Mg(2+)</name>
        <dbReference type="ChEBI" id="CHEBI:18420"/>
        <label>1</label>
    </ligand>
</feature>
<feature type="binding site" evidence="14 41">
    <location>
        <position position="164"/>
    </location>
    <ligand>
        <name>Mg(2+)</name>
        <dbReference type="ChEBI" id="CHEBI:18420"/>
        <label>1</label>
    </ligand>
</feature>
<feature type="binding site" evidence="9 10 14 31 32 35 37 42">
    <location>
        <position position="225"/>
    </location>
    <ligand>
        <name>Mg(2+)</name>
        <dbReference type="ChEBI" id="CHEBI:18420"/>
        <label>2</label>
    </ligand>
</feature>
<feature type="binding site" evidence="9 10 14 31 32 35 37 42">
    <location>
        <position position="229"/>
    </location>
    <ligand>
        <name>Mg(2+)</name>
        <dbReference type="ChEBI" id="CHEBI:18420"/>
        <label>2</label>
    </ligand>
</feature>
<feature type="binding site" evidence="9 10 14 31 32 35 37 42">
    <location>
        <position position="233"/>
    </location>
    <ligand>
        <name>Mg(2+)</name>
        <dbReference type="ChEBI" id="CHEBI:18420"/>
        <label>2</label>
    </ligand>
</feature>
<feature type="binding site" evidence="10 14 36 38">
    <location>
        <position position="239"/>
    </location>
    <ligand>
        <name>Mg(2+)</name>
        <dbReference type="ChEBI" id="CHEBI:18420"/>
        <label>3</label>
    </ligand>
</feature>
<feature type="binding site" evidence="10 14 36 38">
    <location>
        <position position="241"/>
    </location>
    <ligand>
        <name>Mg(2+)</name>
        <dbReference type="ChEBI" id="CHEBI:18420"/>
        <label>3</label>
    </ligand>
</feature>
<feature type="mutagenesis site" description="Does not significantly perturb the overall structure of trichodiene synthase but leads to an increased KM, a reduction in kcat, as well as to the production of anomalous sesquiterpene products in addition to trichodiene when incubated with farnesyl diphosphate." evidence="3 20">
    <original>D</original>
    <variation>E</variation>
    <location>
        <position position="100"/>
    </location>
</feature>
<feature type="mutagenesis site" description="Leads to an increased KM for Mg(2+), a reduction in kcat, as well as to the production of anomalous sesquiterpene products in addition to trichodiene when incubated with farnesyl diphosphate." evidence="20">
    <original>D</original>
    <variation>E</variation>
    <location>
        <position position="101"/>
    </location>
</feature>
<feature type="mutagenesis site" description="Does not significantly affect the KM and kcat for farnesyl diphosphate." evidence="20">
    <original>D</original>
    <variation>E</variation>
    <location>
        <position position="104"/>
    </location>
</feature>
<feature type="mutagenesis site" description="Leads to the loss of activity." evidence="18">
    <original>C</original>
    <variation>F</variation>
    <location>
        <position position="146"/>
    </location>
</feature>
<feature type="mutagenesis site" description="Increases the KM for farnesyl diphosphate by about 1.3-fold and reduces the kcat by about 2000-fold." evidence="18">
    <original>C</original>
    <variation>F</variation>
    <location>
        <position position="190"/>
    </location>
</feature>
<feature type="mutagenesis site" description="Increases the KM for farnesyl diphosphate by about 6-fold and reduces the kcat by about 28-fold. Leads to complete loss of activity; when associated with S-229." evidence="14">
    <original>N</original>
    <variation>D</variation>
    <location>
        <position position="225"/>
    </location>
</feature>
<feature type="mutagenesis site" description="Increases the KM for farnesyl diphosphate by about 77-fold and reduces the kcat by about 9-fold. Leads to complete loss of activity; when associated with D-225." evidence="14">
    <original>S</original>
    <variation>T</variation>
    <location>
        <position position="229"/>
    </location>
</feature>
<feature type="mutagenesis site" description="Does not affect the catalytic activity." evidence="14">
    <original>Y</original>
    <variation>F</variation>
    <location>
        <position position="295"/>
    </location>
</feature>
<feature type="mutagenesis site" description="Does not cause large changes in the overall structure but increases the KM for farnesyl diphosphate by about 25-fold, reduces the kcat by about 200-fold, and leads to conversion of farnesyl diphosphate not only to trichodiene but to at least 2 additional C(15)H(24) hydrocarbons." evidence="10 18">
    <original>R</original>
    <variation>K</variation>
    <location>
        <position position="304"/>
    </location>
</feature>
<feature type="mutagenesis site" description="Does not cause large changes in the overall structure but increases the KM for farnesyl diphosphate by about 7-fold." evidence="9 18">
    <original>Y</original>
    <variation>F</variation>
    <location>
        <position position="305"/>
    </location>
</feature>
<feature type="mutagenesis site" description="Increases the KM for farnesyl diphosphate by about 80-fold, reduces the kcat by about 120-fold, and leads to the conversion of farneyl diphosphate to an approximately equal mixture of trichodiene and an unidentified sesquiterpene hydrocarbon." evidence="18">
    <original>Y</original>
    <variation>T</variation>
    <location>
        <position position="305"/>
    </location>
</feature>
<feature type="helix" evidence="45">
    <location>
        <begin position="6"/>
        <end position="19"/>
    </location>
</feature>
<feature type="helix" evidence="45">
    <location>
        <begin position="29"/>
        <end position="47"/>
    </location>
</feature>
<feature type="helix" evidence="45">
    <location>
        <begin position="50"/>
        <end position="55"/>
    </location>
</feature>
<feature type="helix" evidence="45">
    <location>
        <begin position="60"/>
        <end position="77"/>
    </location>
</feature>
<feature type="helix" evidence="45">
    <location>
        <begin position="83"/>
        <end position="99"/>
    </location>
</feature>
<feature type="helix" evidence="45">
    <location>
        <begin position="107"/>
        <end position="110"/>
    </location>
</feature>
<feature type="helix" evidence="45">
    <location>
        <begin position="113"/>
        <end position="119"/>
    </location>
</feature>
<feature type="helix" evidence="45">
    <location>
        <begin position="126"/>
        <end position="139"/>
    </location>
</feature>
<feature type="helix" evidence="45">
    <location>
        <begin position="144"/>
        <end position="164"/>
    </location>
</feature>
<feature type="turn" evidence="46">
    <location>
        <begin position="165"/>
        <end position="167"/>
    </location>
</feature>
<feature type="helix" evidence="45">
    <location>
        <begin position="177"/>
        <end position="186"/>
    </location>
</feature>
<feature type="helix" evidence="45">
    <location>
        <begin position="188"/>
        <end position="193"/>
    </location>
</feature>
<feature type="turn" evidence="45">
    <location>
        <begin position="198"/>
        <end position="200"/>
    </location>
</feature>
<feature type="turn" evidence="45">
    <location>
        <begin position="203"/>
        <end position="206"/>
    </location>
</feature>
<feature type="helix" evidence="45">
    <location>
        <begin position="207"/>
        <end position="233"/>
    </location>
</feature>
<feature type="helix" evidence="45">
    <location>
        <begin position="243"/>
        <end position="251"/>
    </location>
</feature>
<feature type="helix" evidence="45">
    <location>
        <begin position="255"/>
        <end position="277"/>
    </location>
</feature>
<feature type="strand" evidence="45">
    <location>
        <begin position="278"/>
        <end position="280"/>
    </location>
</feature>
<feature type="helix" evidence="45">
    <location>
        <begin position="282"/>
        <end position="301"/>
    </location>
</feature>
<feature type="helix" evidence="45">
    <location>
        <begin position="303"/>
        <end position="305"/>
    </location>
</feature>
<feature type="helix" evidence="45">
    <location>
        <begin position="308"/>
        <end position="314"/>
    </location>
</feature>
<feature type="helix" evidence="45">
    <location>
        <begin position="320"/>
        <end position="336"/>
    </location>
</feature>
<feature type="helix" evidence="45">
    <location>
        <begin position="340"/>
        <end position="342"/>
    </location>
</feature>
<feature type="helix" evidence="45">
    <location>
        <begin position="348"/>
        <end position="353"/>
    </location>
</feature>
<gene>
    <name evidence="22" type="primary">TRI5</name>
    <name type="synonym">TOX 5</name>
</gene>
<evidence type="ECO:0000269" key="1">
    <source>
    </source>
</evidence>
<evidence type="ECO:0000269" key="2">
    <source>
    </source>
</evidence>
<evidence type="ECO:0000269" key="3">
    <source>
    </source>
</evidence>
<evidence type="ECO:0000269" key="4">
    <source>
    </source>
</evidence>
<evidence type="ECO:0000269" key="5">
    <source>
    </source>
</evidence>
<evidence type="ECO:0000269" key="6">
    <source>
    </source>
</evidence>
<evidence type="ECO:0000269" key="7">
    <source>
    </source>
</evidence>
<evidence type="ECO:0000269" key="8">
    <source>
    </source>
</evidence>
<evidence type="ECO:0000269" key="9">
    <source>
    </source>
</evidence>
<evidence type="ECO:0000269" key="10">
    <source>
    </source>
</evidence>
<evidence type="ECO:0000269" key="11">
    <source>
    </source>
</evidence>
<evidence type="ECO:0000269" key="12">
    <source>
    </source>
</evidence>
<evidence type="ECO:0000269" key="13">
    <source>
    </source>
</evidence>
<evidence type="ECO:0000269" key="14">
    <source>
    </source>
</evidence>
<evidence type="ECO:0000269" key="15">
    <source>
    </source>
</evidence>
<evidence type="ECO:0000269" key="16">
    <source>
    </source>
</evidence>
<evidence type="ECO:0000269" key="17">
    <source>
    </source>
</evidence>
<evidence type="ECO:0000269" key="18">
    <source>
    </source>
</evidence>
<evidence type="ECO:0000269" key="19">
    <source>
    </source>
</evidence>
<evidence type="ECO:0000269" key="20">
    <source>
    </source>
</evidence>
<evidence type="ECO:0000269" key="21">
    <source>
    </source>
</evidence>
<evidence type="ECO:0000303" key="22">
    <source>
    </source>
</evidence>
<evidence type="ECO:0000303" key="23">
    <source>
    </source>
</evidence>
<evidence type="ECO:0000303" key="24">
    <source>
    </source>
</evidence>
<evidence type="ECO:0000305" key="25"/>
<evidence type="ECO:0007744" key="26">
    <source>
        <dbReference type="PDB" id="1JFA"/>
    </source>
</evidence>
<evidence type="ECO:0007744" key="27">
    <source>
        <dbReference type="PDB" id="1JFG"/>
    </source>
</evidence>
<evidence type="ECO:0007744" key="28">
    <source>
        <dbReference type="PDB" id="1KIY"/>
    </source>
</evidence>
<evidence type="ECO:0007744" key="29">
    <source>
        <dbReference type="PDB" id="1KIZ"/>
    </source>
</evidence>
<evidence type="ECO:0007744" key="30">
    <source>
        <dbReference type="PDB" id="1YJ4"/>
    </source>
</evidence>
<evidence type="ECO:0007744" key="31">
    <source>
        <dbReference type="PDB" id="1YYQ"/>
    </source>
</evidence>
<evidence type="ECO:0007744" key="32">
    <source>
        <dbReference type="PDB" id="1YYR"/>
    </source>
</evidence>
<evidence type="ECO:0007744" key="33">
    <source>
        <dbReference type="PDB" id="1YYS"/>
    </source>
</evidence>
<evidence type="ECO:0007744" key="34">
    <source>
        <dbReference type="PDB" id="1YYT"/>
    </source>
</evidence>
<evidence type="ECO:0007744" key="35">
    <source>
        <dbReference type="PDB" id="1YYU"/>
    </source>
</evidence>
<evidence type="ECO:0007744" key="36">
    <source>
        <dbReference type="PDB" id="2AEK"/>
    </source>
</evidence>
<evidence type="ECO:0007744" key="37">
    <source>
        <dbReference type="PDB" id="2AET"/>
    </source>
</evidence>
<evidence type="ECO:0007744" key="38">
    <source>
        <dbReference type="PDB" id="2PS4"/>
    </source>
</evidence>
<evidence type="ECO:0007744" key="39">
    <source>
        <dbReference type="PDB" id="2PS5"/>
    </source>
</evidence>
<evidence type="ECO:0007744" key="40">
    <source>
        <dbReference type="PDB" id="2PS6"/>
    </source>
</evidence>
<evidence type="ECO:0007744" key="41">
    <source>
        <dbReference type="PDB" id="2PS7"/>
    </source>
</evidence>
<evidence type="ECO:0007744" key="42">
    <source>
        <dbReference type="PDB" id="2PS8"/>
    </source>
</evidence>
<evidence type="ECO:0007744" key="43">
    <source>
        <dbReference type="PDB" id="2Q9Y"/>
    </source>
</evidence>
<evidence type="ECO:0007744" key="44">
    <source>
        <dbReference type="PDB" id="2Q9Z"/>
    </source>
</evidence>
<evidence type="ECO:0007829" key="45">
    <source>
        <dbReference type="PDB" id="1YYQ"/>
    </source>
</evidence>
<evidence type="ECO:0007829" key="46">
    <source>
        <dbReference type="PDB" id="2PS4"/>
    </source>
</evidence>